<gene>
    <name evidence="1" type="primary">pheS</name>
    <name type="ordered locus">Gura_2624</name>
</gene>
<evidence type="ECO:0000255" key="1">
    <source>
        <dbReference type="HAMAP-Rule" id="MF_00281"/>
    </source>
</evidence>
<protein>
    <recommendedName>
        <fullName evidence="1">Phenylalanine--tRNA ligase alpha subunit</fullName>
        <ecNumber evidence="1">6.1.1.20</ecNumber>
    </recommendedName>
    <alternativeName>
        <fullName evidence="1">Phenylalanyl-tRNA synthetase alpha subunit</fullName>
        <shortName evidence="1">PheRS</shortName>
    </alternativeName>
</protein>
<comment type="catalytic activity">
    <reaction evidence="1">
        <text>tRNA(Phe) + L-phenylalanine + ATP = L-phenylalanyl-tRNA(Phe) + AMP + diphosphate + H(+)</text>
        <dbReference type="Rhea" id="RHEA:19413"/>
        <dbReference type="Rhea" id="RHEA-COMP:9668"/>
        <dbReference type="Rhea" id="RHEA-COMP:9699"/>
        <dbReference type="ChEBI" id="CHEBI:15378"/>
        <dbReference type="ChEBI" id="CHEBI:30616"/>
        <dbReference type="ChEBI" id="CHEBI:33019"/>
        <dbReference type="ChEBI" id="CHEBI:58095"/>
        <dbReference type="ChEBI" id="CHEBI:78442"/>
        <dbReference type="ChEBI" id="CHEBI:78531"/>
        <dbReference type="ChEBI" id="CHEBI:456215"/>
        <dbReference type="EC" id="6.1.1.20"/>
    </reaction>
</comment>
<comment type="cofactor">
    <cofactor evidence="1">
        <name>Mg(2+)</name>
        <dbReference type="ChEBI" id="CHEBI:18420"/>
    </cofactor>
    <text evidence="1">Binds 2 magnesium ions per tetramer.</text>
</comment>
<comment type="subunit">
    <text evidence="1">Tetramer of two alpha and two beta subunits.</text>
</comment>
<comment type="subcellular location">
    <subcellularLocation>
        <location evidence="1">Cytoplasm</location>
    </subcellularLocation>
</comment>
<comment type="similarity">
    <text evidence="1">Belongs to the class-II aminoacyl-tRNA synthetase family. Phe-tRNA synthetase alpha subunit type 1 subfamily.</text>
</comment>
<proteinExistence type="inferred from homology"/>
<accession>A5G4T3</accession>
<reference key="1">
    <citation type="submission" date="2007-05" db="EMBL/GenBank/DDBJ databases">
        <title>Complete sequence of Geobacter uraniireducens Rf4.</title>
        <authorList>
            <consortium name="US DOE Joint Genome Institute"/>
            <person name="Copeland A."/>
            <person name="Lucas S."/>
            <person name="Lapidus A."/>
            <person name="Barry K."/>
            <person name="Detter J.C."/>
            <person name="Glavina del Rio T."/>
            <person name="Hammon N."/>
            <person name="Israni S."/>
            <person name="Dalin E."/>
            <person name="Tice H."/>
            <person name="Pitluck S."/>
            <person name="Chertkov O."/>
            <person name="Brettin T."/>
            <person name="Bruce D."/>
            <person name="Han C."/>
            <person name="Schmutz J."/>
            <person name="Larimer F."/>
            <person name="Land M."/>
            <person name="Hauser L."/>
            <person name="Kyrpides N."/>
            <person name="Mikhailova N."/>
            <person name="Shelobolina E."/>
            <person name="Aklujkar M."/>
            <person name="Lovley D."/>
            <person name="Richardson P."/>
        </authorList>
    </citation>
    <scope>NUCLEOTIDE SEQUENCE [LARGE SCALE GENOMIC DNA]</scope>
    <source>
        <strain>ATCC BAA-1134 / JCM 13001 / Rf4</strain>
    </source>
</reference>
<feature type="chain" id="PRO_1000078840" description="Phenylalanine--tRNA ligase alpha subunit">
    <location>
        <begin position="1"/>
        <end position="338"/>
    </location>
</feature>
<feature type="binding site" evidence="1">
    <location>
        <position position="253"/>
    </location>
    <ligand>
        <name>Mg(2+)</name>
        <dbReference type="ChEBI" id="CHEBI:18420"/>
        <note>shared with beta subunit</note>
    </ligand>
</feature>
<sequence length="338" mass="37677">MREKLEALLADAVAELSQVSTEDGLQELRVKYLGKKGELTAVMKGLGALSPEERPVIGQVVNTVKGELEAKIESAGLKIREDIKAEKLRSERVDVTLPGRRRPIGTRHPITLVIEEITAIFAGLGFLVAEGPEIEHDFYNFEALNFPKDHPARDMQDTFFISDTVLLRTHTSPVQIRTMLKQAPPVRIIAPGTVYRCDSDATHSPMFHQIEGLMVDKGVTFGDLKGILTIFINQLFGQGTGVRLRPSFFPFTEPSAEVDIACVICKGKGCRVCKNTGWLEILGAGMVDPEVYRHVNYDSEIYSGFAFGMGIERIAMLKYGISDMRLLFENDLRFLKQF</sequence>
<organism>
    <name type="scientific">Geotalea uraniireducens (strain Rf4)</name>
    <name type="common">Geobacter uraniireducens</name>
    <dbReference type="NCBI Taxonomy" id="351605"/>
    <lineage>
        <taxon>Bacteria</taxon>
        <taxon>Pseudomonadati</taxon>
        <taxon>Thermodesulfobacteriota</taxon>
        <taxon>Desulfuromonadia</taxon>
        <taxon>Geobacterales</taxon>
        <taxon>Geobacteraceae</taxon>
        <taxon>Geotalea</taxon>
    </lineage>
</organism>
<dbReference type="EC" id="6.1.1.20" evidence="1"/>
<dbReference type="EMBL" id="CP000698">
    <property type="protein sequence ID" value="ABQ26801.1"/>
    <property type="molecule type" value="Genomic_DNA"/>
</dbReference>
<dbReference type="RefSeq" id="WP_011939478.1">
    <property type="nucleotide sequence ID" value="NC_009483.1"/>
</dbReference>
<dbReference type="SMR" id="A5G4T3"/>
<dbReference type="STRING" id="351605.Gura_2624"/>
<dbReference type="KEGG" id="gur:Gura_2624"/>
<dbReference type="HOGENOM" id="CLU_025086_0_1_7"/>
<dbReference type="OrthoDB" id="9800719at2"/>
<dbReference type="Proteomes" id="UP000006695">
    <property type="component" value="Chromosome"/>
</dbReference>
<dbReference type="GO" id="GO:0005737">
    <property type="term" value="C:cytoplasm"/>
    <property type="evidence" value="ECO:0007669"/>
    <property type="project" value="UniProtKB-SubCell"/>
</dbReference>
<dbReference type="GO" id="GO:0005524">
    <property type="term" value="F:ATP binding"/>
    <property type="evidence" value="ECO:0007669"/>
    <property type="project" value="UniProtKB-UniRule"/>
</dbReference>
<dbReference type="GO" id="GO:0000287">
    <property type="term" value="F:magnesium ion binding"/>
    <property type="evidence" value="ECO:0007669"/>
    <property type="project" value="UniProtKB-UniRule"/>
</dbReference>
<dbReference type="GO" id="GO:0004826">
    <property type="term" value="F:phenylalanine-tRNA ligase activity"/>
    <property type="evidence" value="ECO:0007669"/>
    <property type="project" value="UniProtKB-UniRule"/>
</dbReference>
<dbReference type="GO" id="GO:0000049">
    <property type="term" value="F:tRNA binding"/>
    <property type="evidence" value="ECO:0007669"/>
    <property type="project" value="InterPro"/>
</dbReference>
<dbReference type="GO" id="GO:0006432">
    <property type="term" value="P:phenylalanyl-tRNA aminoacylation"/>
    <property type="evidence" value="ECO:0007669"/>
    <property type="project" value="UniProtKB-UniRule"/>
</dbReference>
<dbReference type="CDD" id="cd00496">
    <property type="entry name" value="PheRS_alpha_core"/>
    <property type="match status" value="1"/>
</dbReference>
<dbReference type="FunFam" id="3.30.930.10:FF:000003">
    <property type="entry name" value="Phenylalanine--tRNA ligase alpha subunit"/>
    <property type="match status" value="1"/>
</dbReference>
<dbReference type="Gene3D" id="3.30.930.10">
    <property type="entry name" value="Bira Bifunctional Protein, Domain 2"/>
    <property type="match status" value="1"/>
</dbReference>
<dbReference type="HAMAP" id="MF_00281">
    <property type="entry name" value="Phe_tRNA_synth_alpha1"/>
    <property type="match status" value="1"/>
</dbReference>
<dbReference type="InterPro" id="IPR006195">
    <property type="entry name" value="aa-tRNA-synth_II"/>
</dbReference>
<dbReference type="InterPro" id="IPR045864">
    <property type="entry name" value="aa-tRNA-synth_II/BPL/LPL"/>
</dbReference>
<dbReference type="InterPro" id="IPR004529">
    <property type="entry name" value="Phe-tRNA-synth_IIc_asu"/>
</dbReference>
<dbReference type="InterPro" id="IPR004188">
    <property type="entry name" value="Phe-tRNA_ligase_II_N"/>
</dbReference>
<dbReference type="InterPro" id="IPR022911">
    <property type="entry name" value="Phe_tRNA_ligase_alpha1_bac"/>
</dbReference>
<dbReference type="InterPro" id="IPR002319">
    <property type="entry name" value="Phenylalanyl-tRNA_Synthase"/>
</dbReference>
<dbReference type="InterPro" id="IPR010978">
    <property type="entry name" value="tRNA-bd_arm"/>
</dbReference>
<dbReference type="NCBIfam" id="TIGR00468">
    <property type="entry name" value="pheS"/>
    <property type="match status" value="1"/>
</dbReference>
<dbReference type="PANTHER" id="PTHR11538:SF41">
    <property type="entry name" value="PHENYLALANINE--TRNA LIGASE, MITOCHONDRIAL"/>
    <property type="match status" value="1"/>
</dbReference>
<dbReference type="PANTHER" id="PTHR11538">
    <property type="entry name" value="PHENYLALANYL-TRNA SYNTHETASE"/>
    <property type="match status" value="1"/>
</dbReference>
<dbReference type="Pfam" id="PF02912">
    <property type="entry name" value="Phe_tRNA-synt_N"/>
    <property type="match status" value="1"/>
</dbReference>
<dbReference type="Pfam" id="PF01409">
    <property type="entry name" value="tRNA-synt_2d"/>
    <property type="match status" value="1"/>
</dbReference>
<dbReference type="SUPFAM" id="SSF55681">
    <property type="entry name" value="Class II aaRS and biotin synthetases"/>
    <property type="match status" value="1"/>
</dbReference>
<dbReference type="SUPFAM" id="SSF46589">
    <property type="entry name" value="tRNA-binding arm"/>
    <property type="match status" value="1"/>
</dbReference>
<dbReference type="PROSITE" id="PS50862">
    <property type="entry name" value="AA_TRNA_LIGASE_II"/>
    <property type="match status" value="1"/>
</dbReference>
<keyword id="KW-0030">Aminoacyl-tRNA synthetase</keyword>
<keyword id="KW-0067">ATP-binding</keyword>
<keyword id="KW-0963">Cytoplasm</keyword>
<keyword id="KW-0436">Ligase</keyword>
<keyword id="KW-0460">Magnesium</keyword>
<keyword id="KW-0479">Metal-binding</keyword>
<keyword id="KW-0547">Nucleotide-binding</keyword>
<keyword id="KW-0648">Protein biosynthesis</keyword>
<keyword id="KW-1185">Reference proteome</keyword>
<name>SYFA_GEOUR</name>